<reference key="1">
    <citation type="journal article" date="2011" name="Proc. Natl. Acad. Sci. U.S.A.">
        <title>Genomic anatomy of Escherichia coli O157:H7 outbreaks.</title>
        <authorList>
            <person name="Eppinger M."/>
            <person name="Mammel M.K."/>
            <person name="Leclerc J.E."/>
            <person name="Ravel J."/>
            <person name="Cebula T.A."/>
        </authorList>
    </citation>
    <scope>NUCLEOTIDE SEQUENCE [LARGE SCALE GENOMIC DNA]</scope>
    <source>
        <strain>EC4115 / EHEC</strain>
    </source>
</reference>
<accession>B5Z3T2</accession>
<comment type="function">
    <text evidence="1">Nucleotide-binding protein.</text>
</comment>
<comment type="similarity">
    <text evidence="1">Belongs to the YajQ family.</text>
</comment>
<dbReference type="EMBL" id="CP001164">
    <property type="protein sequence ID" value="ACI38366.1"/>
    <property type="molecule type" value="Genomic_DNA"/>
</dbReference>
<dbReference type="RefSeq" id="WP_001138904.1">
    <property type="nucleotide sequence ID" value="NC_011353.1"/>
</dbReference>
<dbReference type="SMR" id="B5Z3T2"/>
<dbReference type="GeneID" id="93777034"/>
<dbReference type="KEGG" id="ecf:ECH74115_0510"/>
<dbReference type="HOGENOM" id="CLU_099839_1_0_6"/>
<dbReference type="GO" id="GO:0005829">
    <property type="term" value="C:cytosol"/>
    <property type="evidence" value="ECO:0007669"/>
    <property type="project" value="TreeGrafter"/>
</dbReference>
<dbReference type="GO" id="GO:0000166">
    <property type="term" value="F:nucleotide binding"/>
    <property type="evidence" value="ECO:0007669"/>
    <property type="project" value="TreeGrafter"/>
</dbReference>
<dbReference type="CDD" id="cd11740">
    <property type="entry name" value="YajQ_like"/>
    <property type="match status" value="1"/>
</dbReference>
<dbReference type="FunFam" id="3.30.70.860:FF:000001">
    <property type="entry name" value="UPF0234 protein YajQ"/>
    <property type="match status" value="1"/>
</dbReference>
<dbReference type="FunFam" id="3.30.70.990:FF:000001">
    <property type="entry name" value="UPF0234 protein YajQ"/>
    <property type="match status" value="1"/>
</dbReference>
<dbReference type="Gene3D" id="3.30.70.860">
    <property type="match status" value="1"/>
</dbReference>
<dbReference type="Gene3D" id="3.30.70.990">
    <property type="entry name" value="YajQ-like, domain 2"/>
    <property type="match status" value="1"/>
</dbReference>
<dbReference type="HAMAP" id="MF_00632">
    <property type="entry name" value="YajQ"/>
    <property type="match status" value="1"/>
</dbReference>
<dbReference type="InterPro" id="IPR007551">
    <property type="entry name" value="DUF520"/>
</dbReference>
<dbReference type="InterPro" id="IPR035571">
    <property type="entry name" value="UPF0234-like_C"/>
</dbReference>
<dbReference type="InterPro" id="IPR035570">
    <property type="entry name" value="UPF0234_N"/>
</dbReference>
<dbReference type="InterPro" id="IPR036183">
    <property type="entry name" value="YajQ-like_sf"/>
</dbReference>
<dbReference type="NCBIfam" id="NF003819">
    <property type="entry name" value="PRK05412.1"/>
    <property type="match status" value="1"/>
</dbReference>
<dbReference type="PANTHER" id="PTHR30476">
    <property type="entry name" value="UPF0234 PROTEIN YAJQ"/>
    <property type="match status" value="1"/>
</dbReference>
<dbReference type="PANTHER" id="PTHR30476:SF0">
    <property type="entry name" value="UPF0234 PROTEIN YAJQ"/>
    <property type="match status" value="1"/>
</dbReference>
<dbReference type="Pfam" id="PF04461">
    <property type="entry name" value="DUF520"/>
    <property type="match status" value="1"/>
</dbReference>
<dbReference type="SUPFAM" id="SSF89963">
    <property type="entry name" value="YajQ-like"/>
    <property type="match status" value="2"/>
</dbReference>
<sequence length="163" mass="18344">MPSFDIVSEVDLQEARNAVDNASREVESRFDFRNVEASFELNDASKTIKVLSESDFQVNQLLDILRAKLLKRGIEGSSLDVPENIVHSGKTWFVEAKLKQGIESATQKKIVKMIKDSKLKVQAQIQGDEIRVTGKSRDDLQAVMAMVRGGDLGQPFQFKNFRD</sequence>
<protein>
    <recommendedName>
        <fullName evidence="1">Nucleotide-binding protein YajQ</fullName>
    </recommendedName>
</protein>
<proteinExistence type="inferred from homology"/>
<gene>
    <name evidence="1" type="primary">yajQ</name>
    <name type="ordered locus">ECH74115_0510</name>
</gene>
<feature type="chain" id="PRO_1000130618" description="Nucleotide-binding protein YajQ">
    <location>
        <begin position="1"/>
        <end position="163"/>
    </location>
</feature>
<organism>
    <name type="scientific">Escherichia coli O157:H7 (strain EC4115 / EHEC)</name>
    <dbReference type="NCBI Taxonomy" id="444450"/>
    <lineage>
        <taxon>Bacteria</taxon>
        <taxon>Pseudomonadati</taxon>
        <taxon>Pseudomonadota</taxon>
        <taxon>Gammaproteobacteria</taxon>
        <taxon>Enterobacterales</taxon>
        <taxon>Enterobacteriaceae</taxon>
        <taxon>Escherichia</taxon>
    </lineage>
</organism>
<evidence type="ECO:0000255" key="1">
    <source>
        <dbReference type="HAMAP-Rule" id="MF_00632"/>
    </source>
</evidence>
<keyword id="KW-0547">Nucleotide-binding</keyword>
<name>YAJQ_ECO5E</name>